<comment type="function">
    <text>Has an integral role during the infection of macrophages in the mammalian host.</text>
</comment>
<comment type="catalytic activity">
    <reaction>
        <text>Preference for hydrophobic residues at P1 and P1' and basic residues at P2' and P3'. A model nonapeptide is cleaved at -Ala-Tyr-|-Leu-Lys-Lys-.</text>
        <dbReference type="EC" id="3.4.24.36"/>
    </reaction>
</comment>
<comment type="cofactor">
    <cofactor evidence="2">
        <name>Zn(2+)</name>
        <dbReference type="ChEBI" id="CHEBI:29105"/>
    </cofactor>
    <text evidence="2">Binds 1 zinc ion per subunit.</text>
</comment>
<comment type="subcellular location">
    <subcellularLocation>
        <location evidence="1">Cell membrane</location>
        <topology evidence="1">Lipid-anchor</topology>
        <topology evidence="1">GPI-anchor</topology>
    </subcellularLocation>
</comment>
<comment type="similarity">
    <text evidence="6">Belongs to the peptidase M8 family.</text>
</comment>
<reference key="1">
    <citation type="journal article" date="1996" name="J. Biol. Chem.">
        <title>Posttranslational regulation of a Leishmania HEXXH metalloprotease (gp63). The effects of site-specific mutagenesis of catalytic, zinc binding, N-glycosylation, and glycosyl phosphatidylinositol addition sites on N-terminal end cleavage, intracellular stability, and extracellular exit.</title>
        <authorList>
            <person name="McGwire B.S."/>
            <person name="Chang K.-P."/>
        </authorList>
    </citation>
    <scope>NUCLEOTIDE SEQUENCE [GENOMIC DNA]</scope>
    <source>
        <strain>MHOM/BR/73/LV78</strain>
    </source>
</reference>
<sequence length="597" mass="63053">MSVDSSSTHRHRCVAARLVPLAAAGAAVTVAVGTAAAWAHAGAVQHRCIHDAMQARVRQSVAAQRMAPSAVSAVGLPHVTLDAGNTAAGADPSTGTANVVRAANWGALRIAVSAEDLTDPAYHCARVGQRVNNHVGDIVTCTAEDILTDEKRDILVKHLVPQALQLHRERLKVQQVQGKWKVTGMTADVCRYFKVPPAHVTGGVTNTDFVLYVASVPSEESVLAWATTCQVFADGHPAVGVINIPAANIASRYDQLVTRVVAHEMAHALGFSGTFFDRVGIVQKVPDVRGKPYFTPMINSSTAVAKAREQYGCNSLEYLEMEDQGSAAPGSHIKANAQDELMAPTASAGYYTALTMAVFQDLGFYQADFSKAEAMPWGRNAACAFLSEKCMANGITKWPAMFCNESADAIRCPTSRLGVGMCDVTPYQALPPYLQYFTDPFLAGSSAFMDYCPVVVPYADGSCAQSASEADAAFKAFNVFSDAAACIDGAFRPKTTHGLIKSYAALCANVKCDTAARTYSVQVRGSSGYANCTPGLRFDLSTVSDAFEKGGYVTCPPYVEVCQGNAQAIKDGGNAAGRRGPRAATALVVAALLAVAL</sequence>
<dbReference type="EC" id="3.4.24.36"/>
<dbReference type="EMBL" id="L46798">
    <property type="protein sequence ID" value="AAA82695.1"/>
    <property type="molecule type" value="Genomic_DNA"/>
</dbReference>
<dbReference type="SMR" id="Q27673"/>
<dbReference type="MEROPS" id="M08.001"/>
<dbReference type="GlyConnect" id="337">
    <property type="glycosylation" value="4 N-Linked glycans"/>
</dbReference>
<dbReference type="GlyCosmos" id="Q27673">
    <property type="glycosylation" value="2 sites, 8 glycans"/>
</dbReference>
<dbReference type="VEuPathDB" id="TriTrypDB:LAMA_000560400"/>
<dbReference type="VEuPathDB" id="TriTrypDB:LAMAPH8_000153500"/>
<dbReference type="BRENDA" id="3.4.24.36">
    <property type="organism ID" value="2945"/>
</dbReference>
<dbReference type="GO" id="GO:0005737">
    <property type="term" value="C:cytoplasm"/>
    <property type="evidence" value="ECO:0007669"/>
    <property type="project" value="TreeGrafter"/>
</dbReference>
<dbReference type="GO" id="GO:0005886">
    <property type="term" value="C:plasma membrane"/>
    <property type="evidence" value="ECO:0007669"/>
    <property type="project" value="UniProtKB-SubCell"/>
</dbReference>
<dbReference type="GO" id="GO:0098552">
    <property type="term" value="C:side of membrane"/>
    <property type="evidence" value="ECO:0007669"/>
    <property type="project" value="UniProtKB-KW"/>
</dbReference>
<dbReference type="GO" id="GO:0046872">
    <property type="term" value="F:metal ion binding"/>
    <property type="evidence" value="ECO:0007669"/>
    <property type="project" value="UniProtKB-KW"/>
</dbReference>
<dbReference type="GO" id="GO:0004222">
    <property type="term" value="F:metalloendopeptidase activity"/>
    <property type="evidence" value="ECO:0007669"/>
    <property type="project" value="InterPro"/>
</dbReference>
<dbReference type="GO" id="GO:0007155">
    <property type="term" value="P:cell adhesion"/>
    <property type="evidence" value="ECO:0007669"/>
    <property type="project" value="UniProtKB-KW"/>
</dbReference>
<dbReference type="GO" id="GO:0006508">
    <property type="term" value="P:proteolysis"/>
    <property type="evidence" value="ECO:0007669"/>
    <property type="project" value="UniProtKB-KW"/>
</dbReference>
<dbReference type="FunFam" id="3.10.170.20:FF:000005">
    <property type="entry name" value="MSP-A1 surface protease homolog"/>
    <property type="match status" value="1"/>
</dbReference>
<dbReference type="Gene3D" id="3.10.170.20">
    <property type="match status" value="1"/>
</dbReference>
<dbReference type="Gene3D" id="3.90.132.10">
    <property type="entry name" value="Leishmanolysin , domain 2"/>
    <property type="match status" value="1"/>
</dbReference>
<dbReference type="Gene3D" id="2.10.55.10">
    <property type="entry name" value="Leishmanolysin domain 3"/>
    <property type="match status" value="1"/>
</dbReference>
<dbReference type="Gene3D" id="2.30.34.10">
    <property type="entry name" value="Leishmanolysin domain 4"/>
    <property type="match status" value="1"/>
</dbReference>
<dbReference type="InterPro" id="IPR001577">
    <property type="entry name" value="Peptidase_M8"/>
</dbReference>
<dbReference type="PANTHER" id="PTHR10942">
    <property type="entry name" value="LEISHMANOLYSIN-LIKE PEPTIDASE"/>
    <property type="match status" value="1"/>
</dbReference>
<dbReference type="PANTHER" id="PTHR10942:SF0">
    <property type="entry name" value="LEISHMANOLYSIN-LIKE PEPTIDASE"/>
    <property type="match status" value="1"/>
</dbReference>
<dbReference type="Pfam" id="PF01457">
    <property type="entry name" value="Peptidase_M8"/>
    <property type="match status" value="1"/>
</dbReference>
<dbReference type="PRINTS" id="PR00782">
    <property type="entry name" value="LSHMANOLYSIN"/>
</dbReference>
<dbReference type="SUPFAM" id="SSF55486">
    <property type="entry name" value="Metalloproteases ('zincins'), catalytic domain"/>
    <property type="match status" value="1"/>
</dbReference>
<dbReference type="PROSITE" id="PS00142">
    <property type="entry name" value="ZINC_PROTEASE"/>
    <property type="match status" value="1"/>
</dbReference>
<keyword id="KW-0130">Cell adhesion</keyword>
<keyword id="KW-1003">Cell membrane</keyword>
<keyword id="KW-1015">Disulfide bond</keyword>
<keyword id="KW-0325">Glycoprotein</keyword>
<keyword id="KW-0336">GPI-anchor</keyword>
<keyword id="KW-0378">Hydrolase</keyword>
<keyword id="KW-0449">Lipoprotein</keyword>
<keyword id="KW-0472">Membrane</keyword>
<keyword id="KW-0479">Metal-binding</keyword>
<keyword id="KW-0482">Metalloprotease</keyword>
<keyword id="KW-0645">Protease</keyword>
<keyword id="KW-0732">Signal</keyword>
<keyword id="KW-0862">Zinc</keyword>
<keyword id="KW-0865">Zymogen</keyword>
<organism>
    <name type="scientific">Leishmania amazonensis</name>
    <dbReference type="NCBI Taxonomy" id="5659"/>
    <lineage>
        <taxon>Eukaryota</taxon>
        <taxon>Discoba</taxon>
        <taxon>Euglenozoa</taxon>
        <taxon>Kinetoplastea</taxon>
        <taxon>Metakinetoplastina</taxon>
        <taxon>Trypanosomatida</taxon>
        <taxon>Trypanosomatidae</taxon>
        <taxon>Leishmaniinae</taxon>
        <taxon>Leishmania</taxon>
    </lineage>
</organism>
<name>GP63_LEIAM</name>
<protein>
    <recommendedName>
        <fullName>Leishmanolysin</fullName>
        <ecNumber>3.4.24.36</ecNumber>
    </recommendedName>
    <alternativeName>
        <fullName>Cell surface protease</fullName>
    </alternativeName>
    <alternativeName>
        <fullName>Major surface glycoprotein</fullName>
    </alternativeName>
    <alternativeName>
        <fullName>Major surface protease</fullName>
    </alternativeName>
    <alternativeName>
        <fullName>Promastigote surface endopeptidase</fullName>
    </alternativeName>
    <alternativeName>
        <fullName>Protein gp63</fullName>
    </alternativeName>
</protein>
<proteinExistence type="inferred from homology"/>
<accession>Q27673</accession>
<gene>
    <name type="primary">gp63</name>
</gene>
<feature type="signal peptide" evidence="3">
    <location>
        <begin position="1"/>
        <end position="39"/>
    </location>
</feature>
<feature type="propeptide" id="PRO_0000028655" description="Activation peptide" evidence="2">
    <location>
        <begin position="40"/>
        <end position="99"/>
    </location>
</feature>
<feature type="chain" id="PRO_0000028656" description="Leishmanolysin">
    <location>
        <begin position="100"/>
        <end position="574"/>
    </location>
</feature>
<feature type="propeptide" id="PRO_0000028657" description="Removed in mature form" evidence="2">
    <location>
        <begin position="575"/>
        <end position="597"/>
    </location>
</feature>
<feature type="active site" evidence="5">
    <location>
        <position position="264"/>
    </location>
</feature>
<feature type="binding site" evidence="5">
    <location>
        <position position="263"/>
    </location>
    <ligand>
        <name>Zn(2+)</name>
        <dbReference type="ChEBI" id="CHEBI:29105"/>
        <note>catalytic</note>
    </ligand>
</feature>
<feature type="binding site" evidence="5">
    <location>
        <position position="267"/>
    </location>
    <ligand>
        <name>Zn(2+)</name>
        <dbReference type="ChEBI" id="CHEBI:29105"/>
        <note>catalytic</note>
    </ligand>
</feature>
<feature type="binding site" evidence="5">
    <location>
        <position position="332"/>
    </location>
    <ligand>
        <name>Zn(2+)</name>
        <dbReference type="ChEBI" id="CHEBI:29105"/>
        <note>catalytic</note>
    </ligand>
</feature>
<feature type="lipid moiety-binding region" description="GPI-anchor amidated asparagine" evidence="2">
    <location>
        <position position="574"/>
    </location>
</feature>
<feature type="glycosylation site" description="N-linked (GlcNAc...) asparagine" evidence="4">
    <location>
        <position position="299"/>
    </location>
</feature>
<feature type="glycosylation site" description="N-linked (GlcNAc...) asparagine" evidence="4">
    <location>
        <position position="404"/>
    </location>
</feature>
<feature type="disulfide bond" evidence="2">
    <location>
        <begin position="124"/>
        <end position="141"/>
    </location>
</feature>
<feature type="disulfide bond" evidence="2">
    <location>
        <begin position="190"/>
        <end position="229"/>
    </location>
</feature>
<feature type="disulfide bond" evidence="2">
    <location>
        <begin position="313"/>
        <end position="383"/>
    </location>
</feature>
<feature type="disulfide bond" evidence="2">
    <location>
        <begin position="390"/>
        <end position="452"/>
    </location>
</feature>
<feature type="disulfide bond" evidence="2">
    <location>
        <begin position="403"/>
        <end position="422"/>
    </location>
</feature>
<feature type="disulfide bond" evidence="2">
    <location>
        <begin position="412"/>
        <end position="486"/>
    </location>
</feature>
<feature type="disulfide bond" evidence="2">
    <location>
        <begin position="463"/>
        <end position="507"/>
    </location>
</feature>
<feature type="disulfide bond" evidence="2">
    <location>
        <begin position="512"/>
        <end position="562"/>
    </location>
</feature>
<feature type="disulfide bond" evidence="2">
    <location>
        <begin position="532"/>
        <end position="555"/>
    </location>
</feature>
<evidence type="ECO:0000250" key="1"/>
<evidence type="ECO:0000250" key="2">
    <source>
        <dbReference type="UniProtKB" id="P08148"/>
    </source>
</evidence>
<evidence type="ECO:0000255" key="3"/>
<evidence type="ECO:0000255" key="4">
    <source>
        <dbReference type="PROSITE-ProRule" id="PRU00498"/>
    </source>
</evidence>
<evidence type="ECO:0000255" key="5">
    <source>
        <dbReference type="PROSITE-ProRule" id="PRU10095"/>
    </source>
</evidence>
<evidence type="ECO:0000305" key="6"/>